<sequence>MITIDKILEILKNDHNFREILFHEHYYYNWTQNVTFNALSYDSRQISSDTLFFAKGATFKKEYLDSAITAGLSFYVSEIDYGADIPVILVNDIKKAMSLISMSFYNNPQNKLKLLAFTGTKGKTTAAYFAYHMLKVNHRPAMLSTMNTTLDGKSFFKSHLTTPESLDLFRMMATAVENQMTHLVMEVSSQAYLTKRVYGLTFDVGVFLNISPDHIGPIEHPTFEDYFFHKRLLMENSNAVVVNSQMDHFNIVKEQVEYIPHDFYGDYSENVITESQAFSFHVKGKLENTYDIKLIGKFNQENAIAAGLACLRLGVSIEDIKNGIAQTTVPGRMEVLTQTNGAKIFVDYAHNGDSLKKLLAVVEEHQKGDIILVLGAPGNKGQSRRKDFGDVINQHPNLQVILTADDPNFEDPLVISQEIASHINRPVTIIIDREEAIANASTLTNCKLDAIIIAGKGADAYQIIKGNHDNYSGDLEVAKKYLKR</sequence>
<protein>
    <recommendedName>
        <fullName evidence="1">UDP-N-acetylmuramoyl-L-alanyl-D-glutamate--L-lysine ligase</fullName>
        <ecNumber evidence="1">6.3.2.7</ecNumber>
    </recommendedName>
    <alternativeName>
        <fullName evidence="1">L-lysine-adding enzyme</fullName>
    </alternativeName>
    <alternativeName>
        <fullName evidence="1">UDP-MurNAc-L-Ala-D-Glu:L-Lys ligase</fullName>
    </alternativeName>
    <alternativeName>
        <fullName evidence="1">UDP-MurNAc-tripeptide synthetase</fullName>
    </alternativeName>
    <alternativeName>
        <fullName evidence="1">UDP-N-acetylmuramyl-tripeptide synthetase</fullName>
    </alternativeName>
</protein>
<reference key="1">
    <citation type="journal article" date="2005" name="Proc. Natl. Acad. Sci. U.S.A.">
        <title>Genome analysis of multiple pathogenic isolates of Streptococcus agalactiae: implications for the microbial 'pan-genome'.</title>
        <authorList>
            <person name="Tettelin H."/>
            <person name="Masignani V."/>
            <person name="Cieslewicz M.J."/>
            <person name="Donati C."/>
            <person name="Medini D."/>
            <person name="Ward N.L."/>
            <person name="Angiuoli S.V."/>
            <person name="Crabtree J."/>
            <person name="Jones A.L."/>
            <person name="Durkin A.S."/>
            <person name="DeBoy R.T."/>
            <person name="Davidsen T.M."/>
            <person name="Mora M."/>
            <person name="Scarselli M."/>
            <person name="Margarit y Ros I."/>
            <person name="Peterson J.D."/>
            <person name="Hauser C.R."/>
            <person name="Sundaram J.P."/>
            <person name="Nelson W.C."/>
            <person name="Madupu R."/>
            <person name="Brinkac L.M."/>
            <person name="Dodson R.J."/>
            <person name="Rosovitz M.J."/>
            <person name="Sullivan S.A."/>
            <person name="Daugherty S.C."/>
            <person name="Haft D.H."/>
            <person name="Selengut J."/>
            <person name="Gwinn M.L."/>
            <person name="Zhou L."/>
            <person name="Zafar N."/>
            <person name="Khouri H."/>
            <person name="Radune D."/>
            <person name="Dimitrov G."/>
            <person name="Watkins K."/>
            <person name="O'Connor K.J."/>
            <person name="Smith S."/>
            <person name="Utterback T.R."/>
            <person name="White O."/>
            <person name="Rubens C.E."/>
            <person name="Grandi G."/>
            <person name="Madoff L.C."/>
            <person name="Kasper D.L."/>
            <person name="Telford J.L."/>
            <person name="Wessels M.R."/>
            <person name="Rappuoli R."/>
            <person name="Fraser C.M."/>
        </authorList>
    </citation>
    <scope>NUCLEOTIDE SEQUENCE [LARGE SCALE GENOMIC DNA]</scope>
    <source>
        <strain>ATCC 27591 / A909 / CDC SS700</strain>
    </source>
</reference>
<feature type="chain" id="PRO_1000012385" description="UDP-N-acetylmuramoyl-L-alanyl-D-glutamate--L-lysine ligase">
    <location>
        <begin position="1"/>
        <end position="484"/>
    </location>
</feature>
<feature type="short sequence motif" description="L-lysine recognition motif">
    <location>
        <begin position="405"/>
        <end position="408"/>
    </location>
</feature>
<feature type="binding site" evidence="1">
    <location>
        <position position="43"/>
    </location>
    <ligand>
        <name>UDP-N-acetyl-alpha-D-muramoyl-L-alanyl-D-glutamate</name>
        <dbReference type="ChEBI" id="CHEBI:83900"/>
    </ligand>
</feature>
<feature type="binding site" evidence="1">
    <location>
        <begin position="119"/>
        <end position="125"/>
    </location>
    <ligand>
        <name>ATP</name>
        <dbReference type="ChEBI" id="CHEBI:30616"/>
    </ligand>
</feature>
<feature type="binding site" evidence="1">
    <location>
        <begin position="161"/>
        <end position="162"/>
    </location>
    <ligand>
        <name>UDP-N-acetyl-alpha-D-muramoyl-L-alanyl-D-glutamate</name>
        <dbReference type="ChEBI" id="CHEBI:83900"/>
    </ligand>
</feature>
<feature type="binding site" evidence="1">
    <location>
        <position position="188"/>
    </location>
    <ligand>
        <name>UDP-N-acetyl-alpha-D-muramoyl-L-alanyl-D-glutamate</name>
        <dbReference type="ChEBI" id="CHEBI:83900"/>
    </ligand>
</feature>
<feature type="binding site" evidence="1">
    <location>
        <position position="196"/>
    </location>
    <ligand>
        <name>UDP-N-acetyl-alpha-D-muramoyl-L-alanyl-D-glutamate</name>
        <dbReference type="ChEBI" id="CHEBI:83900"/>
    </ligand>
</feature>
<feature type="modified residue" description="N6-carboxylysine" evidence="1">
    <location>
        <position position="230"/>
    </location>
</feature>
<accession>Q3K0C1</accession>
<comment type="function">
    <text evidence="1">Catalyzes the addition of L-lysine to the nucleotide precursor UDP-N-acetylmuramoyl-L-alanyl-D-glutamate (UMAG) in the biosynthesis of bacterial cell-wall peptidoglycan.</text>
</comment>
<comment type="catalytic activity">
    <reaction evidence="1">
        <text>UDP-N-acetyl-alpha-D-muramoyl-L-alanyl-D-glutamate + L-lysine + ATP = UDP-N-acetyl-alpha-D-muramoyl-L-alanyl-gamma-D-glutamyl-L-lysine + ADP + phosphate + H(+)</text>
        <dbReference type="Rhea" id="RHEA:17969"/>
        <dbReference type="ChEBI" id="CHEBI:15378"/>
        <dbReference type="ChEBI" id="CHEBI:30616"/>
        <dbReference type="ChEBI" id="CHEBI:32551"/>
        <dbReference type="ChEBI" id="CHEBI:43474"/>
        <dbReference type="ChEBI" id="CHEBI:83900"/>
        <dbReference type="ChEBI" id="CHEBI:83903"/>
        <dbReference type="ChEBI" id="CHEBI:456216"/>
        <dbReference type="EC" id="6.3.2.7"/>
    </reaction>
</comment>
<comment type="pathway">
    <text evidence="1">Cell wall biogenesis; peptidoglycan biosynthesis.</text>
</comment>
<comment type="subcellular location">
    <subcellularLocation>
        <location evidence="1">Cytoplasm</location>
    </subcellularLocation>
</comment>
<comment type="PTM">
    <text evidence="1">Carboxylation is probably crucial for Mg(2+) binding and, consequently, for the gamma-phosphate positioning of ATP.</text>
</comment>
<comment type="similarity">
    <text evidence="1">Belongs to the MurCDEF family. MurE subfamily.</text>
</comment>
<keyword id="KW-0067">ATP-binding</keyword>
<keyword id="KW-0131">Cell cycle</keyword>
<keyword id="KW-0132">Cell division</keyword>
<keyword id="KW-0133">Cell shape</keyword>
<keyword id="KW-0961">Cell wall biogenesis/degradation</keyword>
<keyword id="KW-0963">Cytoplasm</keyword>
<keyword id="KW-0436">Ligase</keyword>
<keyword id="KW-0547">Nucleotide-binding</keyword>
<keyword id="KW-0573">Peptidoglycan synthesis</keyword>
<name>MURE_STRA1</name>
<organism>
    <name type="scientific">Streptococcus agalactiae serotype Ia (strain ATCC 27591 / A909 / CDC SS700)</name>
    <dbReference type="NCBI Taxonomy" id="205921"/>
    <lineage>
        <taxon>Bacteria</taxon>
        <taxon>Bacillati</taxon>
        <taxon>Bacillota</taxon>
        <taxon>Bacilli</taxon>
        <taxon>Lactobacillales</taxon>
        <taxon>Streptococcaceae</taxon>
        <taxon>Streptococcus</taxon>
    </lineage>
</organism>
<gene>
    <name evidence="1" type="primary">murE</name>
    <name type="ordered locus">SAK_1424</name>
</gene>
<proteinExistence type="inferred from homology"/>
<evidence type="ECO:0000255" key="1">
    <source>
        <dbReference type="HAMAP-Rule" id="MF_00208"/>
    </source>
</evidence>
<dbReference type="EC" id="6.3.2.7" evidence="1"/>
<dbReference type="EMBL" id="CP000114">
    <property type="protein sequence ID" value="ABA45236.1"/>
    <property type="molecule type" value="Genomic_DNA"/>
</dbReference>
<dbReference type="RefSeq" id="WP_000628272.1">
    <property type="nucleotide sequence ID" value="NC_007432.1"/>
</dbReference>
<dbReference type="SMR" id="Q3K0C1"/>
<dbReference type="KEGG" id="sak:SAK_1424"/>
<dbReference type="HOGENOM" id="CLU_022291_4_2_9"/>
<dbReference type="UniPathway" id="UPA00219"/>
<dbReference type="GO" id="GO:0005737">
    <property type="term" value="C:cytoplasm"/>
    <property type="evidence" value="ECO:0007669"/>
    <property type="project" value="UniProtKB-SubCell"/>
</dbReference>
<dbReference type="GO" id="GO:0005524">
    <property type="term" value="F:ATP binding"/>
    <property type="evidence" value="ECO:0007669"/>
    <property type="project" value="UniProtKB-UniRule"/>
</dbReference>
<dbReference type="GO" id="GO:0000287">
    <property type="term" value="F:magnesium ion binding"/>
    <property type="evidence" value="ECO:0007669"/>
    <property type="project" value="UniProtKB-UniRule"/>
</dbReference>
<dbReference type="GO" id="GO:0047482">
    <property type="term" value="F:UDP-N-acetylmuramoyl-L-alanyl-D-glutamate-L-lysine ligase activity"/>
    <property type="evidence" value="ECO:0007669"/>
    <property type="project" value="UniProtKB-UniRule"/>
</dbReference>
<dbReference type="GO" id="GO:0051301">
    <property type="term" value="P:cell division"/>
    <property type="evidence" value="ECO:0007669"/>
    <property type="project" value="UniProtKB-KW"/>
</dbReference>
<dbReference type="GO" id="GO:0071555">
    <property type="term" value="P:cell wall organization"/>
    <property type="evidence" value="ECO:0007669"/>
    <property type="project" value="UniProtKB-KW"/>
</dbReference>
<dbReference type="GO" id="GO:0009252">
    <property type="term" value="P:peptidoglycan biosynthetic process"/>
    <property type="evidence" value="ECO:0007669"/>
    <property type="project" value="UniProtKB-UniRule"/>
</dbReference>
<dbReference type="GO" id="GO:0008360">
    <property type="term" value="P:regulation of cell shape"/>
    <property type="evidence" value="ECO:0007669"/>
    <property type="project" value="UniProtKB-KW"/>
</dbReference>
<dbReference type="Gene3D" id="3.90.190.20">
    <property type="entry name" value="Mur ligase, C-terminal domain"/>
    <property type="match status" value="1"/>
</dbReference>
<dbReference type="Gene3D" id="3.40.1190.10">
    <property type="entry name" value="Mur-like, catalytic domain"/>
    <property type="match status" value="1"/>
</dbReference>
<dbReference type="Gene3D" id="3.40.1390.10">
    <property type="entry name" value="MurE/MurF, N-terminal domain"/>
    <property type="match status" value="1"/>
</dbReference>
<dbReference type="HAMAP" id="MF_00208">
    <property type="entry name" value="MurE"/>
    <property type="match status" value="1"/>
</dbReference>
<dbReference type="InterPro" id="IPR036565">
    <property type="entry name" value="Mur-like_cat_sf"/>
</dbReference>
<dbReference type="InterPro" id="IPR004101">
    <property type="entry name" value="Mur_ligase_C"/>
</dbReference>
<dbReference type="InterPro" id="IPR036615">
    <property type="entry name" value="Mur_ligase_C_dom_sf"/>
</dbReference>
<dbReference type="InterPro" id="IPR013221">
    <property type="entry name" value="Mur_ligase_cen"/>
</dbReference>
<dbReference type="InterPro" id="IPR035911">
    <property type="entry name" value="MurE/MurF_N"/>
</dbReference>
<dbReference type="InterPro" id="IPR005761">
    <property type="entry name" value="UDP-N-AcMur-Glu-dNH2Pim_ligase"/>
</dbReference>
<dbReference type="NCBIfam" id="TIGR01085">
    <property type="entry name" value="murE"/>
    <property type="match status" value="1"/>
</dbReference>
<dbReference type="NCBIfam" id="NF010628">
    <property type="entry name" value="PRK14022.1"/>
    <property type="match status" value="1"/>
</dbReference>
<dbReference type="PANTHER" id="PTHR23135">
    <property type="entry name" value="MUR LIGASE FAMILY MEMBER"/>
    <property type="match status" value="1"/>
</dbReference>
<dbReference type="PANTHER" id="PTHR23135:SF4">
    <property type="entry name" value="UDP-N-ACETYLMURAMOYL-L-ALANYL-D-GLUTAMATE--2,6-DIAMINOPIMELATE LIGASE MURE HOMOLOG, CHLOROPLASTIC"/>
    <property type="match status" value="1"/>
</dbReference>
<dbReference type="Pfam" id="PF02875">
    <property type="entry name" value="Mur_ligase_C"/>
    <property type="match status" value="1"/>
</dbReference>
<dbReference type="Pfam" id="PF08245">
    <property type="entry name" value="Mur_ligase_M"/>
    <property type="match status" value="1"/>
</dbReference>
<dbReference type="SUPFAM" id="SSF53623">
    <property type="entry name" value="MurD-like peptide ligases, catalytic domain"/>
    <property type="match status" value="1"/>
</dbReference>
<dbReference type="SUPFAM" id="SSF53244">
    <property type="entry name" value="MurD-like peptide ligases, peptide-binding domain"/>
    <property type="match status" value="1"/>
</dbReference>
<dbReference type="SUPFAM" id="SSF63418">
    <property type="entry name" value="MurE/MurF N-terminal domain"/>
    <property type="match status" value="1"/>
</dbReference>